<proteinExistence type="evidence at protein level"/>
<keyword id="KW-0130">Cell adhesion</keyword>
<keyword id="KW-1015">Disulfide bond</keyword>
<keyword id="KW-0325">Glycoprotein</keyword>
<keyword id="KW-0393">Immunoglobulin domain</keyword>
<keyword id="KW-0433">Leucine-rich repeat</keyword>
<keyword id="KW-0472">Membrane</keyword>
<keyword id="KW-1185">Reference proteome</keyword>
<keyword id="KW-0677">Repeat</keyword>
<keyword id="KW-0732">Signal</keyword>
<keyword id="KW-0812">Transmembrane</keyword>
<keyword id="KW-1133">Transmembrane helix</keyword>
<gene>
    <name evidence="10" type="primary">Amigo3</name>
    <name evidence="9" type="synonym">Ali3</name>
    <name evidence="8" type="synonym">Kiaa1851</name>
</gene>
<name>AMGO3_MOUSE</name>
<accession>Q8C2S7</accession>
<accession>Q6ZPH1</accession>
<accession>Q8CEB3</accession>
<sequence length="508" mass="55625">MAWLVLSGILLCMLGAGLGTSDLEDVLPPAPHNCPDICICAADVLSCAGRGLQDLPVALPTTAAELDLSHNALKRLHPGWLAPLSRLRALHLGYNKLEVLGHGAFTNASGLRTLDLSSNMLRMLHTHDLDGLEELEKLLLFNNSLMHLDLDAFQGLRMLSHLYLSCNELSSFSFNHLHGLGLTRLRTLDLSSNWLKHISIPELAALPTYLKNRLYLHNNPLPCDCSLYHLLRRWHQRGLSALHDFEREYTCLVFKVSESRVRFFEHSRVFKNCSVAAAPGLELPEEQLHAQVGQSLRLFCNTSVPATRVAWVSPKNELLVAPASQDGSIAVLADGSLAIGRVQEQHAGVFVCLASGPRLHHNQTLEYNVSVQKARPEPETFNTGFTTLLGCIVGLVLVLLYLFAPPCRGCCHCCQRACRNRCWPRASSPLQELSAQSSMLSTTPPDAPSRKASVHKHVVFLEPGKKGLNGRVQLAVAEDFDLCNPMGLQLKAGSESASSTGSEGLVMS</sequence>
<reference evidence="6 7" key="1">
    <citation type="journal article" date="2003" name="J. Cell Biol.">
        <title>AMIGO, a transmembrane protein implicated in axon tract development, defines a novel protein family with leucine-rich repeats.</title>
        <authorList>
            <person name="Kuja-Panula J."/>
            <person name="Kiiltomaeki M."/>
            <person name="Yamashiro T."/>
            <person name="Rouhiainen A."/>
            <person name="Rauvala H."/>
        </authorList>
    </citation>
    <scope>NUCLEOTIDE SEQUENCE [MRNA]</scope>
    <scope>SUBUNIT</scope>
    <scope>TISSUE SPECIFICITY</scope>
    <source>
        <strain evidence="7">C57BL/6J</strain>
        <tissue evidence="5">Cerebellum</tissue>
    </source>
</reference>
<reference evidence="9" key="2">
    <citation type="submission" date="2004-03" db="EMBL/GenBank/DDBJ databases">
        <authorList>
            <person name="Ono T."/>
        </authorList>
    </citation>
    <scope>NUCLEOTIDE SEQUENCE [MRNA]</scope>
    <source>
        <tissue evidence="9">Brain</tissue>
    </source>
</reference>
<reference key="3">
    <citation type="journal article" date="2005" name="Science">
        <title>The transcriptional landscape of the mammalian genome.</title>
        <authorList>
            <person name="Carninci P."/>
            <person name="Kasukawa T."/>
            <person name="Katayama S."/>
            <person name="Gough J."/>
            <person name="Frith M.C."/>
            <person name="Maeda N."/>
            <person name="Oyama R."/>
            <person name="Ravasi T."/>
            <person name="Lenhard B."/>
            <person name="Wells C."/>
            <person name="Kodzius R."/>
            <person name="Shimokawa K."/>
            <person name="Bajic V.B."/>
            <person name="Brenner S.E."/>
            <person name="Batalov S."/>
            <person name="Forrest A.R."/>
            <person name="Zavolan M."/>
            <person name="Davis M.J."/>
            <person name="Wilming L.G."/>
            <person name="Aidinis V."/>
            <person name="Allen J.E."/>
            <person name="Ambesi-Impiombato A."/>
            <person name="Apweiler R."/>
            <person name="Aturaliya R.N."/>
            <person name="Bailey T.L."/>
            <person name="Bansal M."/>
            <person name="Baxter L."/>
            <person name="Beisel K.W."/>
            <person name="Bersano T."/>
            <person name="Bono H."/>
            <person name="Chalk A.M."/>
            <person name="Chiu K.P."/>
            <person name="Choudhary V."/>
            <person name="Christoffels A."/>
            <person name="Clutterbuck D.R."/>
            <person name="Crowe M.L."/>
            <person name="Dalla E."/>
            <person name="Dalrymple B.P."/>
            <person name="de Bono B."/>
            <person name="Della Gatta G."/>
            <person name="di Bernardo D."/>
            <person name="Down T."/>
            <person name="Engstrom P."/>
            <person name="Fagiolini M."/>
            <person name="Faulkner G."/>
            <person name="Fletcher C.F."/>
            <person name="Fukushima T."/>
            <person name="Furuno M."/>
            <person name="Futaki S."/>
            <person name="Gariboldi M."/>
            <person name="Georgii-Hemming P."/>
            <person name="Gingeras T.R."/>
            <person name="Gojobori T."/>
            <person name="Green R.E."/>
            <person name="Gustincich S."/>
            <person name="Harbers M."/>
            <person name="Hayashi Y."/>
            <person name="Hensch T.K."/>
            <person name="Hirokawa N."/>
            <person name="Hill D."/>
            <person name="Huminiecki L."/>
            <person name="Iacono M."/>
            <person name="Ikeo K."/>
            <person name="Iwama A."/>
            <person name="Ishikawa T."/>
            <person name="Jakt M."/>
            <person name="Kanapin A."/>
            <person name="Katoh M."/>
            <person name="Kawasawa Y."/>
            <person name="Kelso J."/>
            <person name="Kitamura H."/>
            <person name="Kitano H."/>
            <person name="Kollias G."/>
            <person name="Krishnan S.P."/>
            <person name="Kruger A."/>
            <person name="Kummerfeld S.K."/>
            <person name="Kurochkin I.V."/>
            <person name="Lareau L.F."/>
            <person name="Lazarevic D."/>
            <person name="Lipovich L."/>
            <person name="Liu J."/>
            <person name="Liuni S."/>
            <person name="McWilliam S."/>
            <person name="Madan Babu M."/>
            <person name="Madera M."/>
            <person name="Marchionni L."/>
            <person name="Matsuda H."/>
            <person name="Matsuzawa S."/>
            <person name="Miki H."/>
            <person name="Mignone F."/>
            <person name="Miyake S."/>
            <person name="Morris K."/>
            <person name="Mottagui-Tabar S."/>
            <person name="Mulder N."/>
            <person name="Nakano N."/>
            <person name="Nakauchi H."/>
            <person name="Ng P."/>
            <person name="Nilsson R."/>
            <person name="Nishiguchi S."/>
            <person name="Nishikawa S."/>
            <person name="Nori F."/>
            <person name="Ohara O."/>
            <person name="Okazaki Y."/>
            <person name="Orlando V."/>
            <person name="Pang K.C."/>
            <person name="Pavan W.J."/>
            <person name="Pavesi G."/>
            <person name="Pesole G."/>
            <person name="Petrovsky N."/>
            <person name="Piazza S."/>
            <person name="Reed J."/>
            <person name="Reid J.F."/>
            <person name="Ring B.Z."/>
            <person name="Ringwald M."/>
            <person name="Rost B."/>
            <person name="Ruan Y."/>
            <person name="Salzberg S.L."/>
            <person name="Sandelin A."/>
            <person name="Schneider C."/>
            <person name="Schoenbach C."/>
            <person name="Sekiguchi K."/>
            <person name="Semple C.A."/>
            <person name="Seno S."/>
            <person name="Sessa L."/>
            <person name="Sheng Y."/>
            <person name="Shibata Y."/>
            <person name="Shimada H."/>
            <person name="Shimada K."/>
            <person name="Silva D."/>
            <person name="Sinclair B."/>
            <person name="Sperling S."/>
            <person name="Stupka E."/>
            <person name="Sugiura K."/>
            <person name="Sultana R."/>
            <person name="Takenaka Y."/>
            <person name="Taki K."/>
            <person name="Tammoja K."/>
            <person name="Tan S.L."/>
            <person name="Tang S."/>
            <person name="Taylor M.S."/>
            <person name="Tegner J."/>
            <person name="Teichmann S.A."/>
            <person name="Ueda H.R."/>
            <person name="van Nimwegen E."/>
            <person name="Verardo R."/>
            <person name="Wei C.L."/>
            <person name="Yagi K."/>
            <person name="Yamanishi H."/>
            <person name="Zabarovsky E."/>
            <person name="Zhu S."/>
            <person name="Zimmer A."/>
            <person name="Hide W."/>
            <person name="Bult C."/>
            <person name="Grimmond S.M."/>
            <person name="Teasdale R.D."/>
            <person name="Liu E.T."/>
            <person name="Brusic V."/>
            <person name="Quackenbush J."/>
            <person name="Wahlestedt C."/>
            <person name="Mattick J.S."/>
            <person name="Hume D.A."/>
            <person name="Kai C."/>
            <person name="Sasaki D."/>
            <person name="Tomaru Y."/>
            <person name="Fukuda S."/>
            <person name="Kanamori-Katayama M."/>
            <person name="Suzuki M."/>
            <person name="Aoki J."/>
            <person name="Arakawa T."/>
            <person name="Iida J."/>
            <person name="Imamura K."/>
            <person name="Itoh M."/>
            <person name="Kato T."/>
            <person name="Kawaji H."/>
            <person name="Kawagashira N."/>
            <person name="Kawashima T."/>
            <person name="Kojima M."/>
            <person name="Kondo S."/>
            <person name="Konno H."/>
            <person name="Nakano K."/>
            <person name="Ninomiya N."/>
            <person name="Nishio T."/>
            <person name="Okada M."/>
            <person name="Plessy C."/>
            <person name="Shibata K."/>
            <person name="Shiraki T."/>
            <person name="Suzuki S."/>
            <person name="Tagami M."/>
            <person name="Waki K."/>
            <person name="Watahiki A."/>
            <person name="Okamura-Oho Y."/>
            <person name="Suzuki H."/>
            <person name="Kawai J."/>
            <person name="Hayashizaki Y."/>
        </authorList>
    </citation>
    <scope>NUCLEOTIDE SEQUENCE [LARGE SCALE MRNA]</scope>
    <source>
        <strain>C57BL/6J</strain>
        <strain>NOD</strain>
        <tissue>Skin</tissue>
        <tissue>Thymus</tissue>
    </source>
</reference>
<reference evidence="8" key="4">
    <citation type="journal article" date="2003" name="DNA Res.">
        <title>Prediction of the coding sequences of mouse homologues of KIAA gene: III. The complete nucleotide sequences of 500 mouse KIAA-homologous cDNAs identified by screening of terminal sequences of cDNA clones randomly sampled from size-fractionated libraries.</title>
        <authorList>
            <person name="Okazaki N."/>
            <person name="Kikuno R."/>
            <person name="Ohara R."/>
            <person name="Inamoto S."/>
            <person name="Koseki H."/>
            <person name="Hiraoka S."/>
            <person name="Saga Y."/>
            <person name="Nagase T."/>
            <person name="Ohara O."/>
            <person name="Koga H."/>
        </authorList>
    </citation>
    <scope>NUCLEOTIDE SEQUENCE [LARGE SCALE MRNA]</scope>
    <source>
        <tissue evidence="8">Embryonic tail</tissue>
    </source>
</reference>
<dbReference type="EMBL" id="AY237004">
    <property type="protein sequence ID" value="AAO48945.1"/>
    <property type="molecule type" value="mRNA"/>
</dbReference>
<dbReference type="EMBL" id="AB167510">
    <property type="protein sequence ID" value="BAD12542.1"/>
    <property type="molecule type" value="mRNA"/>
</dbReference>
<dbReference type="EMBL" id="AK028619">
    <property type="protein sequence ID" value="BAC26035.1"/>
    <property type="status" value="ALT_FRAME"/>
    <property type="molecule type" value="mRNA"/>
</dbReference>
<dbReference type="EMBL" id="AK088051">
    <property type="protein sequence ID" value="BAC40120.1"/>
    <property type="molecule type" value="mRNA"/>
</dbReference>
<dbReference type="EMBL" id="AK129456">
    <property type="protein sequence ID" value="BAC98266.1"/>
    <property type="status" value="ALT_INIT"/>
    <property type="molecule type" value="mRNA"/>
</dbReference>
<dbReference type="CCDS" id="CCDS23516.1"/>
<dbReference type="RefSeq" id="NP_796249.1">
    <property type="nucleotide sequence ID" value="NM_177275.4"/>
</dbReference>
<dbReference type="SMR" id="Q8C2S7"/>
<dbReference type="BioGRID" id="236335">
    <property type="interactions" value="2"/>
</dbReference>
<dbReference type="FunCoup" id="Q8C2S7">
    <property type="interactions" value="725"/>
</dbReference>
<dbReference type="STRING" id="10090.ENSMUSP00000082137"/>
<dbReference type="GlyCosmos" id="Q8C2S7">
    <property type="glycosylation" value="6 sites, No reported glycans"/>
</dbReference>
<dbReference type="GlyGen" id="Q8C2S7">
    <property type="glycosylation" value="6 sites, 3 N-linked glycans (4 sites)"/>
</dbReference>
<dbReference type="iPTMnet" id="Q8C2S7"/>
<dbReference type="PhosphoSitePlus" id="Q8C2S7"/>
<dbReference type="PaxDb" id="10090-ENSMUSP00000082137"/>
<dbReference type="ProteomicsDB" id="296028"/>
<dbReference type="Antibodypedia" id="13729">
    <property type="antibodies" value="139 antibodies from 22 providers"/>
</dbReference>
<dbReference type="DNASU" id="320844"/>
<dbReference type="Ensembl" id="ENSMUST00000085060.3">
    <property type="protein sequence ID" value="ENSMUSP00000082137.3"/>
    <property type="gene ID" value="ENSMUSG00000032593.6"/>
</dbReference>
<dbReference type="GeneID" id="320844"/>
<dbReference type="KEGG" id="mmu:320844"/>
<dbReference type="UCSC" id="uc009rom.1">
    <property type="organism name" value="mouse"/>
</dbReference>
<dbReference type="AGR" id="MGI:2444854"/>
<dbReference type="CTD" id="386724"/>
<dbReference type="MGI" id="MGI:2444854">
    <property type="gene designation" value="Amigo3"/>
</dbReference>
<dbReference type="VEuPathDB" id="HostDB:ENSMUSG00000032593"/>
<dbReference type="eggNOG" id="ENOG502QUWU">
    <property type="taxonomic scope" value="Eukaryota"/>
</dbReference>
<dbReference type="GeneTree" id="ENSGT00950000183146"/>
<dbReference type="HOGENOM" id="CLU_030478_0_0_1"/>
<dbReference type="InParanoid" id="Q8C2S7"/>
<dbReference type="OMA" id="TPCRCPP"/>
<dbReference type="OrthoDB" id="1394818at2759"/>
<dbReference type="PhylomeDB" id="Q8C2S7"/>
<dbReference type="TreeFam" id="TF326838"/>
<dbReference type="BioGRID-ORCS" id="320844">
    <property type="hits" value="6 hits in 77 CRISPR screens"/>
</dbReference>
<dbReference type="PRO" id="PR:Q8C2S7"/>
<dbReference type="Proteomes" id="UP000000589">
    <property type="component" value="Chromosome 9"/>
</dbReference>
<dbReference type="RNAct" id="Q8C2S7">
    <property type="molecule type" value="protein"/>
</dbReference>
<dbReference type="Bgee" id="ENSMUSG00000032593">
    <property type="expression patterns" value="Expressed in humerus cartilage element and 64 other cell types or tissues"/>
</dbReference>
<dbReference type="GO" id="GO:0016020">
    <property type="term" value="C:membrane"/>
    <property type="evidence" value="ECO:0000266"/>
    <property type="project" value="MGI"/>
</dbReference>
<dbReference type="GO" id="GO:0044877">
    <property type="term" value="F:protein-containing complex binding"/>
    <property type="evidence" value="ECO:0007669"/>
    <property type="project" value="Ensembl"/>
</dbReference>
<dbReference type="GO" id="GO:0007155">
    <property type="term" value="P:cell adhesion"/>
    <property type="evidence" value="ECO:0000266"/>
    <property type="project" value="MGI"/>
</dbReference>
<dbReference type="GO" id="GO:0007157">
    <property type="term" value="P:heterophilic cell-cell adhesion via plasma membrane cell adhesion molecules"/>
    <property type="evidence" value="ECO:0000250"/>
    <property type="project" value="UniProtKB"/>
</dbReference>
<dbReference type="GO" id="GO:0010977">
    <property type="term" value="P:negative regulation of neuron projection development"/>
    <property type="evidence" value="ECO:0007669"/>
    <property type="project" value="Ensembl"/>
</dbReference>
<dbReference type="GO" id="GO:0007399">
    <property type="term" value="P:nervous system development"/>
    <property type="evidence" value="ECO:0007669"/>
    <property type="project" value="Ensembl"/>
</dbReference>
<dbReference type="GO" id="GO:0051965">
    <property type="term" value="P:positive regulation of synapse assembly"/>
    <property type="evidence" value="ECO:0000314"/>
    <property type="project" value="MGI"/>
</dbReference>
<dbReference type="CDD" id="cd00096">
    <property type="entry name" value="Ig"/>
    <property type="match status" value="1"/>
</dbReference>
<dbReference type="FunFam" id="2.60.40.10:FF:001492">
    <property type="entry name" value="Adhesion molecule with Ig-like domain 3"/>
    <property type="match status" value="1"/>
</dbReference>
<dbReference type="FunFam" id="3.80.10.10:FF:000337">
    <property type="entry name" value="Adhesion molecule with Ig-like domain 3"/>
    <property type="match status" value="1"/>
</dbReference>
<dbReference type="Gene3D" id="2.60.40.10">
    <property type="entry name" value="Immunoglobulins"/>
    <property type="match status" value="1"/>
</dbReference>
<dbReference type="Gene3D" id="3.80.10.10">
    <property type="entry name" value="Ribonuclease Inhibitor"/>
    <property type="match status" value="1"/>
</dbReference>
<dbReference type="InterPro" id="IPR031283">
    <property type="entry name" value="AMIGO"/>
</dbReference>
<dbReference type="InterPro" id="IPR007110">
    <property type="entry name" value="Ig-like_dom"/>
</dbReference>
<dbReference type="InterPro" id="IPR036179">
    <property type="entry name" value="Ig-like_dom_sf"/>
</dbReference>
<dbReference type="InterPro" id="IPR013783">
    <property type="entry name" value="Ig-like_fold"/>
</dbReference>
<dbReference type="InterPro" id="IPR003599">
    <property type="entry name" value="Ig_sub"/>
</dbReference>
<dbReference type="InterPro" id="IPR001611">
    <property type="entry name" value="Leu-rich_rpt"/>
</dbReference>
<dbReference type="InterPro" id="IPR003591">
    <property type="entry name" value="Leu-rich_rpt_typical-subtyp"/>
</dbReference>
<dbReference type="InterPro" id="IPR032675">
    <property type="entry name" value="LRR_dom_sf"/>
</dbReference>
<dbReference type="PANTHER" id="PTHR24368">
    <property type="entry name" value="AMPHOTERIN-INDUCED PROTEIN"/>
    <property type="match status" value="1"/>
</dbReference>
<dbReference type="PANTHER" id="PTHR24368:SF62">
    <property type="entry name" value="AMPHOTERIN-INDUCED PROTEIN 3"/>
    <property type="match status" value="1"/>
</dbReference>
<dbReference type="Pfam" id="PF00560">
    <property type="entry name" value="LRR_1"/>
    <property type="match status" value="1"/>
</dbReference>
<dbReference type="Pfam" id="PF13855">
    <property type="entry name" value="LRR_8"/>
    <property type="match status" value="1"/>
</dbReference>
<dbReference type="SMART" id="SM00409">
    <property type="entry name" value="IG"/>
    <property type="match status" value="1"/>
</dbReference>
<dbReference type="SMART" id="SM00369">
    <property type="entry name" value="LRR_TYP"/>
    <property type="match status" value="6"/>
</dbReference>
<dbReference type="SUPFAM" id="SSF48726">
    <property type="entry name" value="Immunoglobulin"/>
    <property type="match status" value="1"/>
</dbReference>
<dbReference type="SUPFAM" id="SSF52058">
    <property type="entry name" value="L domain-like"/>
    <property type="match status" value="1"/>
</dbReference>
<dbReference type="PROSITE" id="PS50835">
    <property type="entry name" value="IG_LIKE"/>
    <property type="match status" value="1"/>
</dbReference>
<dbReference type="PROSITE" id="PS51450">
    <property type="entry name" value="LRR"/>
    <property type="match status" value="7"/>
</dbReference>
<organism>
    <name type="scientific">Mus musculus</name>
    <name type="common">Mouse</name>
    <dbReference type="NCBI Taxonomy" id="10090"/>
    <lineage>
        <taxon>Eukaryota</taxon>
        <taxon>Metazoa</taxon>
        <taxon>Chordata</taxon>
        <taxon>Craniata</taxon>
        <taxon>Vertebrata</taxon>
        <taxon>Euteleostomi</taxon>
        <taxon>Mammalia</taxon>
        <taxon>Eutheria</taxon>
        <taxon>Euarchontoglires</taxon>
        <taxon>Glires</taxon>
        <taxon>Rodentia</taxon>
        <taxon>Myomorpha</taxon>
        <taxon>Muroidea</taxon>
        <taxon>Muridae</taxon>
        <taxon>Murinae</taxon>
        <taxon>Mus</taxon>
        <taxon>Mus</taxon>
    </lineage>
</organism>
<feature type="signal peptide" evidence="3">
    <location>
        <begin position="1"/>
        <end position="19"/>
    </location>
</feature>
<feature type="chain" id="PRO_0000014514" description="Amphoterin-induced protein 3" evidence="3">
    <location>
        <begin position="20"/>
        <end position="508"/>
    </location>
</feature>
<feature type="topological domain" description="Extracellular" evidence="3">
    <location>
        <begin position="20"/>
        <end position="383"/>
    </location>
</feature>
<feature type="transmembrane region" description="Helical" evidence="3">
    <location>
        <begin position="384"/>
        <end position="404"/>
    </location>
</feature>
<feature type="topological domain" description="Cytoplasmic" evidence="3">
    <location>
        <begin position="405"/>
        <end position="508"/>
    </location>
</feature>
<feature type="domain" description="LRRNT">
    <location>
        <begin position="25"/>
        <end position="61"/>
    </location>
</feature>
<feature type="repeat" description="LRR 1">
    <location>
        <begin position="62"/>
        <end position="83"/>
    </location>
</feature>
<feature type="repeat" description="LRR 2">
    <location>
        <begin position="86"/>
        <end position="107"/>
    </location>
</feature>
<feature type="repeat" description="LRR 3">
    <location>
        <begin position="110"/>
        <end position="133"/>
    </location>
</feature>
<feature type="repeat" description="LRR 4">
    <location>
        <begin position="134"/>
        <end position="155"/>
    </location>
</feature>
<feature type="repeat" description="LRR 5">
    <location>
        <begin position="158"/>
        <end position="178"/>
    </location>
</feature>
<feature type="repeat" description="LRR 6">
    <location>
        <begin position="184"/>
        <end position="207"/>
    </location>
</feature>
<feature type="domain" description="LRRCT">
    <location>
        <begin position="219"/>
        <end position="275"/>
    </location>
</feature>
<feature type="domain" description="Ig-like C2-type" evidence="3">
    <location>
        <begin position="279"/>
        <end position="370"/>
    </location>
</feature>
<feature type="glycosylation site" description="N-linked (GlcNAc...) asparagine" evidence="3">
    <location>
        <position position="107"/>
    </location>
</feature>
<feature type="glycosylation site" description="N-linked (GlcNAc...) asparagine" evidence="3">
    <location>
        <position position="142"/>
    </location>
</feature>
<feature type="glycosylation site" description="N-linked (GlcNAc...) asparagine" evidence="3">
    <location>
        <position position="272"/>
    </location>
</feature>
<feature type="glycosylation site" description="N-linked (GlcNAc...) asparagine" evidence="3">
    <location>
        <position position="301"/>
    </location>
</feature>
<feature type="glycosylation site" description="N-linked (GlcNAc...) asparagine" evidence="3">
    <location>
        <position position="362"/>
    </location>
</feature>
<feature type="glycosylation site" description="N-linked (GlcNAc...) asparagine" evidence="3">
    <location>
        <position position="368"/>
    </location>
</feature>
<feature type="disulfide bond" evidence="4">
    <location>
        <begin position="34"/>
        <end position="40"/>
    </location>
</feature>
<feature type="disulfide bond" evidence="4">
    <location>
        <begin position="38"/>
        <end position="47"/>
    </location>
</feature>
<feature type="disulfide bond" evidence="4">
    <location>
        <begin position="223"/>
        <end position="251"/>
    </location>
</feature>
<feature type="disulfide bond" evidence="4">
    <location>
        <begin position="225"/>
        <end position="273"/>
    </location>
</feature>
<feature type="disulfide bond" evidence="4">
    <location>
        <begin position="300"/>
        <end position="352"/>
    </location>
</feature>
<evidence type="ECO:0000250" key="1"/>
<evidence type="ECO:0000250" key="2">
    <source>
        <dbReference type="UniProtKB" id="Q80ZD5"/>
    </source>
</evidence>
<evidence type="ECO:0000255" key="3"/>
<evidence type="ECO:0000255" key="4">
    <source>
        <dbReference type="PROSITE-ProRule" id="PRU00114"/>
    </source>
</evidence>
<evidence type="ECO:0000269" key="5">
    <source>
    </source>
</evidence>
<evidence type="ECO:0000305" key="6"/>
<evidence type="ECO:0000312" key="7">
    <source>
        <dbReference type="EMBL" id="AAO48945.1"/>
    </source>
</evidence>
<evidence type="ECO:0000312" key="8">
    <source>
        <dbReference type="EMBL" id="BAC98266.1"/>
    </source>
</evidence>
<evidence type="ECO:0000312" key="9">
    <source>
        <dbReference type="EMBL" id="BAD12542.1"/>
    </source>
</evidence>
<evidence type="ECO:0000312" key="10">
    <source>
        <dbReference type="MGI" id="MGI:2444854"/>
    </source>
</evidence>
<protein>
    <recommendedName>
        <fullName>Amphoterin-induced protein 3</fullName>
    </recommendedName>
    <alternativeName>
        <fullName>AMIGO-3</fullName>
    </alternativeName>
    <alternativeName>
        <fullName>Alivin-3</fullName>
    </alternativeName>
</protein>
<comment type="function">
    <text evidence="2">May mediate heterophilic cell-cell interaction. May contribute to signal transduction through its intracellular domain (By similarity).</text>
</comment>
<comment type="subunit">
    <text evidence="1">Binds AMIGO1 or AMIGO2.</text>
</comment>
<comment type="subcellular location">
    <subcellularLocation>
        <location evidence="6">Membrane</location>
        <topology evidence="6">Single-pass type I membrane protein</topology>
    </subcellularLocation>
</comment>
<comment type="tissue specificity">
    <text evidence="5">Ubiquitous.</text>
</comment>
<comment type="similarity">
    <text evidence="6">Belongs to the immunoglobulin superfamily. AMIGO family.</text>
</comment>
<comment type="sequence caution" evidence="6">
    <conflict type="frameshift">
        <sequence resource="EMBL-CDS" id="BAC26035"/>
    </conflict>
</comment>
<comment type="sequence caution" evidence="6">
    <conflict type="erroneous initiation">
        <sequence resource="EMBL-CDS" id="BAC98266"/>
    </conflict>
</comment>